<protein>
    <recommendedName>
        <fullName evidence="2">Large ribosomal subunit protein bL27</fullName>
    </recommendedName>
    <alternativeName>
        <fullName evidence="4">50S ribosomal protein L27</fullName>
    </alternativeName>
</protein>
<organism>
    <name type="scientific">Natranaerobius thermophilus (strain ATCC BAA-1301 / DSM 18059 / JW/NM-WN-LF)</name>
    <dbReference type="NCBI Taxonomy" id="457570"/>
    <lineage>
        <taxon>Bacteria</taxon>
        <taxon>Bacillati</taxon>
        <taxon>Bacillota</taxon>
        <taxon>Clostridia</taxon>
        <taxon>Natranaerobiales</taxon>
        <taxon>Natranaerobiaceae</taxon>
        <taxon>Natranaerobius</taxon>
    </lineage>
</organism>
<reference key="1">
    <citation type="submission" date="2008-04" db="EMBL/GenBank/DDBJ databases">
        <title>Complete sequence of chromosome of Natranaerobius thermophilus JW/NM-WN-LF.</title>
        <authorList>
            <consortium name="US DOE Joint Genome Institute"/>
            <person name="Copeland A."/>
            <person name="Lucas S."/>
            <person name="Lapidus A."/>
            <person name="Glavina del Rio T."/>
            <person name="Dalin E."/>
            <person name="Tice H."/>
            <person name="Bruce D."/>
            <person name="Goodwin L."/>
            <person name="Pitluck S."/>
            <person name="Chertkov O."/>
            <person name="Brettin T."/>
            <person name="Detter J.C."/>
            <person name="Han C."/>
            <person name="Kuske C.R."/>
            <person name="Schmutz J."/>
            <person name="Larimer F."/>
            <person name="Land M."/>
            <person name="Hauser L."/>
            <person name="Kyrpides N."/>
            <person name="Lykidis A."/>
            <person name="Mesbah N.M."/>
            <person name="Wiegel J."/>
        </authorList>
    </citation>
    <scope>NUCLEOTIDE SEQUENCE [LARGE SCALE GENOMIC DNA]</scope>
    <source>
        <strain>ATCC BAA-1301 / DSM 18059 / JW/NM-WN-LF</strain>
    </source>
</reference>
<keyword id="KW-1185">Reference proteome</keyword>
<keyword id="KW-0687">Ribonucleoprotein</keyword>
<keyword id="KW-0689">Ribosomal protein</keyword>
<name>RL27_NATTJ</name>
<accession>B2A6B5</accession>
<proteinExistence type="inferred from homology"/>
<feature type="propeptide" id="PRO_0000459921" evidence="1">
    <location>
        <begin position="1"/>
        <end position="10"/>
    </location>
</feature>
<feature type="chain" id="PRO_1000128778" description="Large ribosomal subunit protein bL27">
    <location>
        <begin position="11"/>
        <end position="98"/>
    </location>
</feature>
<feature type="region of interest" description="Disordered" evidence="3">
    <location>
        <begin position="11"/>
        <end position="30"/>
    </location>
</feature>
<evidence type="ECO:0000250" key="1">
    <source>
        <dbReference type="UniProtKB" id="Q2FXT0"/>
    </source>
</evidence>
<evidence type="ECO:0000255" key="2">
    <source>
        <dbReference type="HAMAP-Rule" id="MF_00539"/>
    </source>
</evidence>
<evidence type="ECO:0000256" key="3">
    <source>
        <dbReference type="SAM" id="MobiDB-lite"/>
    </source>
</evidence>
<evidence type="ECO:0000305" key="4"/>
<sequence>MELKMNLQLFAQKKGTGSSKNGRDSISKRLGVKRHGGQQVNAGNIIVRQRGTKFHPGENVGIGKDDTLFAKADGVVTFEQVGKKKKRVCVYPEPAMAE</sequence>
<gene>
    <name evidence="2" type="primary">rpmA</name>
    <name type="ordered locus">Nther_0530</name>
</gene>
<comment type="PTM">
    <text evidence="1">The N-terminus is cleaved by ribosomal processing cysteine protease Prp.</text>
</comment>
<comment type="similarity">
    <text evidence="2">Belongs to the bacterial ribosomal protein bL27 family.</text>
</comment>
<dbReference type="EMBL" id="CP001034">
    <property type="protein sequence ID" value="ACB84126.1"/>
    <property type="molecule type" value="Genomic_DNA"/>
</dbReference>
<dbReference type="RefSeq" id="WP_012447012.1">
    <property type="nucleotide sequence ID" value="NC_010718.1"/>
</dbReference>
<dbReference type="SMR" id="B2A6B5"/>
<dbReference type="FunCoup" id="B2A6B5">
    <property type="interactions" value="379"/>
</dbReference>
<dbReference type="STRING" id="457570.Nther_0530"/>
<dbReference type="KEGG" id="nth:Nther_0530"/>
<dbReference type="eggNOG" id="COG0211">
    <property type="taxonomic scope" value="Bacteria"/>
</dbReference>
<dbReference type="HOGENOM" id="CLU_095424_4_0_9"/>
<dbReference type="InParanoid" id="B2A6B5"/>
<dbReference type="OrthoDB" id="9803474at2"/>
<dbReference type="Proteomes" id="UP000001683">
    <property type="component" value="Chromosome"/>
</dbReference>
<dbReference type="GO" id="GO:0022625">
    <property type="term" value="C:cytosolic large ribosomal subunit"/>
    <property type="evidence" value="ECO:0007669"/>
    <property type="project" value="TreeGrafter"/>
</dbReference>
<dbReference type="GO" id="GO:0003735">
    <property type="term" value="F:structural constituent of ribosome"/>
    <property type="evidence" value="ECO:0007669"/>
    <property type="project" value="InterPro"/>
</dbReference>
<dbReference type="GO" id="GO:0006412">
    <property type="term" value="P:translation"/>
    <property type="evidence" value="ECO:0007669"/>
    <property type="project" value="UniProtKB-UniRule"/>
</dbReference>
<dbReference type="FunFam" id="2.40.50.100:FF:000004">
    <property type="entry name" value="50S ribosomal protein L27"/>
    <property type="match status" value="1"/>
</dbReference>
<dbReference type="Gene3D" id="2.40.50.100">
    <property type="match status" value="1"/>
</dbReference>
<dbReference type="HAMAP" id="MF_00539">
    <property type="entry name" value="Ribosomal_bL27"/>
    <property type="match status" value="1"/>
</dbReference>
<dbReference type="InterPro" id="IPR001684">
    <property type="entry name" value="Ribosomal_bL27"/>
</dbReference>
<dbReference type="InterPro" id="IPR018261">
    <property type="entry name" value="Ribosomal_bL27_CS"/>
</dbReference>
<dbReference type="NCBIfam" id="TIGR00062">
    <property type="entry name" value="L27"/>
    <property type="match status" value="1"/>
</dbReference>
<dbReference type="PANTHER" id="PTHR15893:SF0">
    <property type="entry name" value="LARGE RIBOSOMAL SUBUNIT PROTEIN BL27M"/>
    <property type="match status" value="1"/>
</dbReference>
<dbReference type="PANTHER" id="PTHR15893">
    <property type="entry name" value="RIBOSOMAL PROTEIN L27"/>
    <property type="match status" value="1"/>
</dbReference>
<dbReference type="Pfam" id="PF01016">
    <property type="entry name" value="Ribosomal_L27"/>
    <property type="match status" value="1"/>
</dbReference>
<dbReference type="PRINTS" id="PR00063">
    <property type="entry name" value="RIBOSOMALL27"/>
</dbReference>
<dbReference type="SUPFAM" id="SSF110324">
    <property type="entry name" value="Ribosomal L27 protein-like"/>
    <property type="match status" value="1"/>
</dbReference>
<dbReference type="PROSITE" id="PS00831">
    <property type="entry name" value="RIBOSOMAL_L27"/>
    <property type="match status" value="1"/>
</dbReference>